<organism>
    <name type="scientific">Sulfurovum sp. (strain NBC37-1)</name>
    <dbReference type="NCBI Taxonomy" id="387093"/>
    <lineage>
        <taxon>Bacteria</taxon>
        <taxon>Pseudomonadati</taxon>
        <taxon>Campylobacterota</taxon>
        <taxon>Epsilonproteobacteria</taxon>
        <taxon>Campylobacterales</taxon>
        <taxon>Sulfurovaceae</taxon>
        <taxon>Sulfurovum</taxon>
    </lineage>
</organism>
<keyword id="KW-0067">ATP-binding</keyword>
<keyword id="KW-0143">Chaperone</keyword>
<keyword id="KW-0963">Cytoplasm</keyword>
<keyword id="KW-0547">Nucleotide-binding</keyword>
<keyword id="KW-0346">Stress response</keyword>
<accession>A6QBI2</accession>
<comment type="function">
    <text evidence="1">Molecular chaperone. Has ATPase activity.</text>
</comment>
<comment type="subunit">
    <text evidence="1">Homodimer.</text>
</comment>
<comment type="subcellular location">
    <subcellularLocation>
        <location evidence="1">Cytoplasm</location>
    </subcellularLocation>
</comment>
<comment type="similarity">
    <text evidence="1">Belongs to the heat shock protein 90 family.</text>
</comment>
<sequence length="620" mass="70620">MAKHQFQTEIGQLLKLMTHSLYSNKEIFIRELISNASDALDKFNYLSLTDEKFKEENWSGKISIKLDKDDNSLTIGDNGIGMNEEDLMDNLGTIAKSGTKAFMENLTGDAKKDSNLIGQFGVGFYSVFMVAEKVDVISKKAGEEQAYMFSTDGTGEYEVKPVTKDEHGTVIYIKLKEDEKEFLDKWRVQEVVKKYSNHIAYPIILNYTEEETTGEGDEKETKTVQKSEQINEATALWTLPKSELKEEDYIEFYKTISHGDDEPLTYLHNKVEGANEFTTLFYIPKKAPMDLYRADYQPGVKLYVKRVFITDDDKELLPPYLRFVRGIIDSEDLPLNVSRELLQENRILANIKQNSVKKILGAIKKLDSEKMEIFTEQYNRVIKEGIYTDHTNKETLLGIVRYKSSSEEGMVSLDDYISRGDSEKKEIYYIVGADEKVLRNSPLLEAYKKANIEVLIMDDEEVDSIVAPMIGSYKEWTFKDITTIDAPDSKTEEEKEEISKEFKPLTDKIKEVLGDEVKEVKISTRLTESPSCVLKDASDPMAGMAAMFAQMGQEMPEIPLILEINPEHEMIKKLDKVEDESLFNDLSWILLDSAKLSEGLEPKDKGAFAHRVASLATKAL</sequence>
<name>HTPG_SULNB</name>
<dbReference type="EMBL" id="AP009179">
    <property type="protein sequence ID" value="BAF72841.1"/>
    <property type="molecule type" value="Genomic_DNA"/>
</dbReference>
<dbReference type="RefSeq" id="WP_012083657.1">
    <property type="nucleotide sequence ID" value="NC_009663.1"/>
</dbReference>
<dbReference type="SMR" id="A6QBI2"/>
<dbReference type="STRING" id="387093.SUN_1894"/>
<dbReference type="KEGG" id="sun:SUN_1894"/>
<dbReference type="eggNOG" id="COG0326">
    <property type="taxonomic scope" value="Bacteria"/>
</dbReference>
<dbReference type="HOGENOM" id="CLU_006684_3_0_7"/>
<dbReference type="OrthoDB" id="9802640at2"/>
<dbReference type="Proteomes" id="UP000006378">
    <property type="component" value="Chromosome"/>
</dbReference>
<dbReference type="GO" id="GO:0005737">
    <property type="term" value="C:cytoplasm"/>
    <property type="evidence" value="ECO:0007669"/>
    <property type="project" value="UniProtKB-SubCell"/>
</dbReference>
<dbReference type="GO" id="GO:0005524">
    <property type="term" value="F:ATP binding"/>
    <property type="evidence" value="ECO:0007669"/>
    <property type="project" value="UniProtKB-UniRule"/>
</dbReference>
<dbReference type="GO" id="GO:0016887">
    <property type="term" value="F:ATP hydrolysis activity"/>
    <property type="evidence" value="ECO:0007669"/>
    <property type="project" value="InterPro"/>
</dbReference>
<dbReference type="GO" id="GO:0140662">
    <property type="term" value="F:ATP-dependent protein folding chaperone"/>
    <property type="evidence" value="ECO:0007669"/>
    <property type="project" value="InterPro"/>
</dbReference>
<dbReference type="GO" id="GO:0051082">
    <property type="term" value="F:unfolded protein binding"/>
    <property type="evidence" value="ECO:0007669"/>
    <property type="project" value="UniProtKB-UniRule"/>
</dbReference>
<dbReference type="CDD" id="cd16927">
    <property type="entry name" value="HATPase_Hsp90-like"/>
    <property type="match status" value="1"/>
</dbReference>
<dbReference type="FunFam" id="3.30.565.10:FF:000009">
    <property type="entry name" value="Molecular chaperone HtpG"/>
    <property type="match status" value="1"/>
</dbReference>
<dbReference type="Gene3D" id="3.30.230.80">
    <property type="match status" value="1"/>
</dbReference>
<dbReference type="Gene3D" id="3.40.50.11260">
    <property type="match status" value="1"/>
</dbReference>
<dbReference type="Gene3D" id="1.20.120.790">
    <property type="entry name" value="Heat shock protein 90, C-terminal domain"/>
    <property type="match status" value="1"/>
</dbReference>
<dbReference type="Gene3D" id="3.30.565.10">
    <property type="entry name" value="Histidine kinase-like ATPase, C-terminal domain"/>
    <property type="match status" value="1"/>
</dbReference>
<dbReference type="HAMAP" id="MF_00505">
    <property type="entry name" value="HSP90"/>
    <property type="match status" value="1"/>
</dbReference>
<dbReference type="InterPro" id="IPR036890">
    <property type="entry name" value="HATPase_C_sf"/>
</dbReference>
<dbReference type="InterPro" id="IPR037196">
    <property type="entry name" value="HSP90_C"/>
</dbReference>
<dbReference type="InterPro" id="IPR001404">
    <property type="entry name" value="Hsp90_fam"/>
</dbReference>
<dbReference type="InterPro" id="IPR020575">
    <property type="entry name" value="Hsp90_N"/>
</dbReference>
<dbReference type="InterPro" id="IPR020568">
    <property type="entry name" value="Ribosomal_Su5_D2-typ_SF"/>
</dbReference>
<dbReference type="NCBIfam" id="NF003555">
    <property type="entry name" value="PRK05218.1"/>
    <property type="match status" value="1"/>
</dbReference>
<dbReference type="PANTHER" id="PTHR11528">
    <property type="entry name" value="HEAT SHOCK PROTEIN 90 FAMILY MEMBER"/>
    <property type="match status" value="1"/>
</dbReference>
<dbReference type="Pfam" id="PF13589">
    <property type="entry name" value="HATPase_c_3"/>
    <property type="match status" value="1"/>
</dbReference>
<dbReference type="Pfam" id="PF00183">
    <property type="entry name" value="HSP90"/>
    <property type="match status" value="1"/>
</dbReference>
<dbReference type="PIRSF" id="PIRSF002583">
    <property type="entry name" value="Hsp90"/>
    <property type="match status" value="1"/>
</dbReference>
<dbReference type="PRINTS" id="PR00775">
    <property type="entry name" value="HEATSHOCK90"/>
</dbReference>
<dbReference type="SMART" id="SM00387">
    <property type="entry name" value="HATPase_c"/>
    <property type="match status" value="1"/>
</dbReference>
<dbReference type="SUPFAM" id="SSF55874">
    <property type="entry name" value="ATPase domain of HSP90 chaperone/DNA topoisomerase II/histidine kinase"/>
    <property type="match status" value="1"/>
</dbReference>
<dbReference type="SUPFAM" id="SSF110942">
    <property type="entry name" value="HSP90 C-terminal domain"/>
    <property type="match status" value="1"/>
</dbReference>
<dbReference type="SUPFAM" id="SSF54211">
    <property type="entry name" value="Ribosomal protein S5 domain 2-like"/>
    <property type="match status" value="1"/>
</dbReference>
<proteinExistence type="inferred from homology"/>
<evidence type="ECO:0000255" key="1">
    <source>
        <dbReference type="HAMAP-Rule" id="MF_00505"/>
    </source>
</evidence>
<feature type="chain" id="PRO_1000014961" description="Chaperone protein HtpG">
    <location>
        <begin position="1"/>
        <end position="620"/>
    </location>
</feature>
<feature type="region of interest" description="A; substrate-binding" evidence="1">
    <location>
        <begin position="1"/>
        <end position="339"/>
    </location>
</feature>
<feature type="region of interest" description="B" evidence="1">
    <location>
        <begin position="340"/>
        <end position="546"/>
    </location>
</feature>
<feature type="region of interest" description="C" evidence="1">
    <location>
        <begin position="547"/>
        <end position="620"/>
    </location>
</feature>
<reference key="1">
    <citation type="journal article" date="2007" name="Proc. Natl. Acad. Sci. U.S.A.">
        <title>Deep-sea vent epsilon-proteobacterial genomes provide insights into emergence of pathogens.</title>
        <authorList>
            <person name="Nakagawa S."/>
            <person name="Takaki Y."/>
            <person name="Shimamura S."/>
            <person name="Reysenbach A.-L."/>
            <person name="Takai K."/>
            <person name="Horikoshi K."/>
        </authorList>
    </citation>
    <scope>NUCLEOTIDE SEQUENCE [LARGE SCALE GENOMIC DNA]</scope>
    <source>
        <strain>NBC37-1</strain>
    </source>
</reference>
<protein>
    <recommendedName>
        <fullName evidence="1">Chaperone protein HtpG</fullName>
    </recommendedName>
    <alternativeName>
        <fullName evidence="1">Heat shock protein HtpG</fullName>
    </alternativeName>
    <alternativeName>
        <fullName evidence="1">High temperature protein G</fullName>
    </alternativeName>
</protein>
<gene>
    <name evidence="1" type="primary">htpG</name>
    <name type="ordered locus">SUN_1894</name>
</gene>